<name>YGGU_ECOL5</name>
<evidence type="ECO:0000255" key="1">
    <source>
        <dbReference type="HAMAP-Rule" id="MF_00634"/>
    </source>
</evidence>
<feature type="chain" id="PRO_1000056766" description="UPF0235 protein YggU">
    <location>
        <begin position="1"/>
        <end position="96"/>
    </location>
</feature>
<proteinExistence type="inferred from homology"/>
<accession>Q0TDP8</accession>
<organism>
    <name type="scientific">Escherichia coli O6:K15:H31 (strain 536 / UPEC)</name>
    <dbReference type="NCBI Taxonomy" id="362663"/>
    <lineage>
        <taxon>Bacteria</taxon>
        <taxon>Pseudomonadati</taxon>
        <taxon>Pseudomonadota</taxon>
        <taxon>Gammaproteobacteria</taxon>
        <taxon>Enterobacterales</taxon>
        <taxon>Enterobacteriaceae</taxon>
        <taxon>Escherichia</taxon>
    </lineage>
</organism>
<dbReference type="EMBL" id="CP000247">
    <property type="protein sequence ID" value="ABG70931.1"/>
    <property type="molecule type" value="Genomic_DNA"/>
</dbReference>
<dbReference type="RefSeq" id="WP_001277222.1">
    <property type="nucleotide sequence ID" value="NC_008253.1"/>
</dbReference>
<dbReference type="SMR" id="Q0TDP8"/>
<dbReference type="GeneID" id="86861043"/>
<dbReference type="KEGG" id="ecp:ECP_2947"/>
<dbReference type="HOGENOM" id="CLU_130694_5_0_6"/>
<dbReference type="Proteomes" id="UP000009182">
    <property type="component" value="Chromosome"/>
</dbReference>
<dbReference type="GO" id="GO:0005737">
    <property type="term" value="C:cytoplasm"/>
    <property type="evidence" value="ECO:0007669"/>
    <property type="project" value="TreeGrafter"/>
</dbReference>
<dbReference type="Gene3D" id="3.30.1200.10">
    <property type="entry name" value="YggU-like"/>
    <property type="match status" value="1"/>
</dbReference>
<dbReference type="HAMAP" id="MF_00634">
    <property type="entry name" value="UPF0235"/>
    <property type="match status" value="1"/>
</dbReference>
<dbReference type="InterPro" id="IPR003746">
    <property type="entry name" value="DUF167"/>
</dbReference>
<dbReference type="InterPro" id="IPR036591">
    <property type="entry name" value="YggU-like_sf"/>
</dbReference>
<dbReference type="NCBIfam" id="TIGR00251">
    <property type="entry name" value="DUF167 family protein"/>
    <property type="match status" value="1"/>
</dbReference>
<dbReference type="NCBIfam" id="NF003466">
    <property type="entry name" value="PRK05090.1"/>
    <property type="match status" value="1"/>
</dbReference>
<dbReference type="PANTHER" id="PTHR13420">
    <property type="entry name" value="UPF0235 PROTEIN C15ORF40"/>
    <property type="match status" value="1"/>
</dbReference>
<dbReference type="PANTHER" id="PTHR13420:SF7">
    <property type="entry name" value="UPF0235 PROTEIN C15ORF40"/>
    <property type="match status" value="1"/>
</dbReference>
<dbReference type="Pfam" id="PF02594">
    <property type="entry name" value="DUF167"/>
    <property type="match status" value="1"/>
</dbReference>
<dbReference type="SMART" id="SM01152">
    <property type="entry name" value="DUF167"/>
    <property type="match status" value="1"/>
</dbReference>
<dbReference type="SUPFAM" id="SSF69786">
    <property type="entry name" value="YggU-like"/>
    <property type="match status" value="1"/>
</dbReference>
<protein>
    <recommendedName>
        <fullName evidence="1">UPF0235 protein YggU</fullName>
    </recommendedName>
</protein>
<gene>
    <name evidence="1" type="primary">yggU</name>
    <name type="ordered locus">ECP_2947</name>
</gene>
<sequence length="96" mass="10429">MSAVTVNDDGLVLRLYIQPKASRDSIVGLHGDEVKVAITAPPVDGQANSHLVKFLGKQFRVAKSQVVIEKGELGRHKQIKIINPQQIPPEIAALIN</sequence>
<comment type="similarity">
    <text evidence="1">Belongs to the UPF0235 family.</text>
</comment>
<reference key="1">
    <citation type="journal article" date="2006" name="Mol. Microbiol.">
        <title>Role of pathogenicity island-associated integrases in the genome plasticity of uropathogenic Escherichia coli strain 536.</title>
        <authorList>
            <person name="Hochhut B."/>
            <person name="Wilde C."/>
            <person name="Balling G."/>
            <person name="Middendorf B."/>
            <person name="Dobrindt U."/>
            <person name="Brzuszkiewicz E."/>
            <person name="Gottschalk G."/>
            <person name="Carniel E."/>
            <person name="Hacker J."/>
        </authorList>
    </citation>
    <scope>NUCLEOTIDE SEQUENCE [LARGE SCALE GENOMIC DNA]</scope>
    <source>
        <strain>536 / UPEC</strain>
    </source>
</reference>